<name>SYQ_SHIBS</name>
<accession>Q324M4</accession>
<sequence>MSEAEARPTNFIRQIIDEDLASGKHTTVHTRFPPEPNGYLHIGHAKSICLNFGIAQDYKGQCNLRFDDTNPVKEDIEYVESIKNDVEWLGFHWSGNVRYSSDYFDQLHAYAIELINKGLAYVDELTPEQIREYRGTLTQPGKNSPYRDRSVEENLALFEKMRAGGFEEGKACLRAKIDMASPFIVMRDPVLYRIKFAEHHQTGNKWCIYPMYDFTHCISDALEGITHSLCTLEFQDNRRLYDWVLDNITIPVHPRQYEFSRLNLEYTVMSKRKLNLLVTDKHVEGWDDPRMPTISGLRRRGYTAASIREFCKRIGVTRQDNTIEMASLESCIREDLNENAPRAMAVIDPVKLVIENYQGEGEMVTMPNHPNKPEMGSRQVPFSSEIWIDRADFREEANKQYKRLVLGKEVRLRNAYVIKAERVEKDAEGNITTIFCTYDADTLSKDPADGRKVKGVIHWVSAAHALPVEIRLYDRLFSVPNPGAADDFLSVINPESLVIKQGFAEPSLKDAVAGKAFQFEREGYFCLDSRHSTAEKPVFNRTVGLRDTWAKVGE</sequence>
<comment type="catalytic activity">
    <reaction evidence="1">
        <text>tRNA(Gln) + L-glutamine + ATP = L-glutaminyl-tRNA(Gln) + AMP + diphosphate</text>
        <dbReference type="Rhea" id="RHEA:20121"/>
        <dbReference type="Rhea" id="RHEA-COMP:9662"/>
        <dbReference type="Rhea" id="RHEA-COMP:9681"/>
        <dbReference type="ChEBI" id="CHEBI:30616"/>
        <dbReference type="ChEBI" id="CHEBI:33019"/>
        <dbReference type="ChEBI" id="CHEBI:58359"/>
        <dbReference type="ChEBI" id="CHEBI:78442"/>
        <dbReference type="ChEBI" id="CHEBI:78521"/>
        <dbReference type="ChEBI" id="CHEBI:456215"/>
        <dbReference type="EC" id="6.1.1.18"/>
    </reaction>
</comment>
<comment type="subunit">
    <text evidence="1">Monomer.</text>
</comment>
<comment type="subcellular location">
    <subcellularLocation>
        <location evidence="1">Cytoplasm</location>
    </subcellularLocation>
</comment>
<comment type="similarity">
    <text evidence="1">Belongs to the class-I aminoacyl-tRNA synthetase family.</text>
</comment>
<dbReference type="EC" id="6.1.1.18" evidence="1"/>
<dbReference type="EMBL" id="CP000036">
    <property type="protein sequence ID" value="ABB65234.1"/>
    <property type="molecule type" value="Genomic_DNA"/>
</dbReference>
<dbReference type="RefSeq" id="WP_001287158.1">
    <property type="nucleotide sequence ID" value="NC_007613.1"/>
</dbReference>
<dbReference type="SMR" id="Q324M4"/>
<dbReference type="KEGG" id="sbo:SBO_0542"/>
<dbReference type="HOGENOM" id="CLU_001882_2_3_6"/>
<dbReference type="Proteomes" id="UP000007067">
    <property type="component" value="Chromosome"/>
</dbReference>
<dbReference type="GO" id="GO:0005829">
    <property type="term" value="C:cytosol"/>
    <property type="evidence" value="ECO:0007669"/>
    <property type="project" value="TreeGrafter"/>
</dbReference>
<dbReference type="GO" id="GO:0005524">
    <property type="term" value="F:ATP binding"/>
    <property type="evidence" value="ECO:0007669"/>
    <property type="project" value="UniProtKB-UniRule"/>
</dbReference>
<dbReference type="GO" id="GO:0004819">
    <property type="term" value="F:glutamine-tRNA ligase activity"/>
    <property type="evidence" value="ECO:0007669"/>
    <property type="project" value="UniProtKB-UniRule"/>
</dbReference>
<dbReference type="GO" id="GO:0006425">
    <property type="term" value="P:glutaminyl-tRNA aminoacylation"/>
    <property type="evidence" value="ECO:0007669"/>
    <property type="project" value="InterPro"/>
</dbReference>
<dbReference type="GO" id="GO:0006424">
    <property type="term" value="P:glutamyl-tRNA aminoacylation"/>
    <property type="evidence" value="ECO:0007669"/>
    <property type="project" value="UniProtKB-UniRule"/>
</dbReference>
<dbReference type="CDD" id="cd00807">
    <property type="entry name" value="GlnRS_core"/>
    <property type="match status" value="1"/>
</dbReference>
<dbReference type="FunFam" id="1.10.1160.10:FF:000001">
    <property type="entry name" value="Glutamine--tRNA ligase"/>
    <property type="match status" value="1"/>
</dbReference>
<dbReference type="FunFam" id="2.40.240.10:FF:000001">
    <property type="entry name" value="Glutamine--tRNA ligase"/>
    <property type="match status" value="1"/>
</dbReference>
<dbReference type="FunFam" id="2.40.240.10:FF:000003">
    <property type="entry name" value="Glutamine--tRNA ligase"/>
    <property type="match status" value="1"/>
</dbReference>
<dbReference type="FunFam" id="3.90.800.10:FF:000001">
    <property type="entry name" value="Glutamine--tRNA ligase"/>
    <property type="match status" value="1"/>
</dbReference>
<dbReference type="FunFam" id="3.40.50.620:FF:000037">
    <property type="entry name" value="Glutamine--tRNA ligase cytoplasmic"/>
    <property type="match status" value="1"/>
</dbReference>
<dbReference type="Gene3D" id="1.10.1160.10">
    <property type="entry name" value="Glutamyl-trna Synthetase, Domain 2"/>
    <property type="match status" value="1"/>
</dbReference>
<dbReference type="Gene3D" id="3.90.800.10">
    <property type="entry name" value="Glutamyl-tRNA Synthetase, Domain 3"/>
    <property type="match status" value="1"/>
</dbReference>
<dbReference type="Gene3D" id="3.40.50.620">
    <property type="entry name" value="HUPs"/>
    <property type="match status" value="1"/>
</dbReference>
<dbReference type="Gene3D" id="2.40.240.10">
    <property type="entry name" value="Ribosomal Protein L25, Chain P"/>
    <property type="match status" value="2"/>
</dbReference>
<dbReference type="HAMAP" id="MF_00126">
    <property type="entry name" value="Gln_tRNA_synth"/>
    <property type="match status" value="1"/>
</dbReference>
<dbReference type="InterPro" id="IPR001412">
    <property type="entry name" value="aa-tRNA-synth_I_CS"/>
</dbReference>
<dbReference type="InterPro" id="IPR004514">
    <property type="entry name" value="Gln-tRNA-synth"/>
</dbReference>
<dbReference type="InterPro" id="IPR050132">
    <property type="entry name" value="Gln/Glu-tRNA_Ligase"/>
</dbReference>
<dbReference type="InterPro" id="IPR022861">
    <property type="entry name" value="Gln_tRNA_ligase_bac"/>
</dbReference>
<dbReference type="InterPro" id="IPR000924">
    <property type="entry name" value="Glu/Gln-tRNA-synth"/>
</dbReference>
<dbReference type="InterPro" id="IPR020058">
    <property type="entry name" value="Glu/Gln-tRNA-synth_Ib_cat-dom"/>
</dbReference>
<dbReference type="InterPro" id="IPR020059">
    <property type="entry name" value="Glu/Gln-tRNA-synth_Ib_codon-bd"/>
</dbReference>
<dbReference type="InterPro" id="IPR020061">
    <property type="entry name" value="Glu_tRNA_lig_a-bdl"/>
</dbReference>
<dbReference type="InterPro" id="IPR020056">
    <property type="entry name" value="Rbsml_bL25/Gln-tRNA_synth_N"/>
</dbReference>
<dbReference type="InterPro" id="IPR011035">
    <property type="entry name" value="Ribosomal_bL25/Gln-tRNA_synth"/>
</dbReference>
<dbReference type="InterPro" id="IPR014729">
    <property type="entry name" value="Rossmann-like_a/b/a_fold"/>
</dbReference>
<dbReference type="InterPro" id="IPR049437">
    <property type="entry name" value="tRNA-synt_1c_C2"/>
</dbReference>
<dbReference type="NCBIfam" id="TIGR00440">
    <property type="entry name" value="glnS"/>
    <property type="match status" value="1"/>
</dbReference>
<dbReference type="NCBIfam" id="NF011291">
    <property type="entry name" value="PRK14703.1"/>
    <property type="match status" value="1"/>
</dbReference>
<dbReference type="PANTHER" id="PTHR43097:SF5">
    <property type="entry name" value="GLUTAMATE--TRNA LIGASE"/>
    <property type="match status" value="1"/>
</dbReference>
<dbReference type="PANTHER" id="PTHR43097">
    <property type="entry name" value="GLUTAMINE-TRNA LIGASE"/>
    <property type="match status" value="1"/>
</dbReference>
<dbReference type="Pfam" id="PF00749">
    <property type="entry name" value="tRNA-synt_1c"/>
    <property type="match status" value="1"/>
</dbReference>
<dbReference type="Pfam" id="PF03950">
    <property type="entry name" value="tRNA-synt_1c_C"/>
    <property type="match status" value="1"/>
</dbReference>
<dbReference type="Pfam" id="PF20974">
    <property type="entry name" value="tRNA-synt_1c_C2"/>
    <property type="match status" value="1"/>
</dbReference>
<dbReference type="PRINTS" id="PR00987">
    <property type="entry name" value="TRNASYNTHGLU"/>
</dbReference>
<dbReference type="SUPFAM" id="SSF52374">
    <property type="entry name" value="Nucleotidylyl transferase"/>
    <property type="match status" value="1"/>
</dbReference>
<dbReference type="SUPFAM" id="SSF50715">
    <property type="entry name" value="Ribosomal protein L25-like"/>
    <property type="match status" value="1"/>
</dbReference>
<dbReference type="PROSITE" id="PS00178">
    <property type="entry name" value="AA_TRNA_LIGASE_I"/>
    <property type="match status" value="1"/>
</dbReference>
<protein>
    <recommendedName>
        <fullName evidence="1">Glutamine--tRNA ligase</fullName>
        <ecNumber evidence="1">6.1.1.18</ecNumber>
    </recommendedName>
    <alternativeName>
        <fullName evidence="1">Glutaminyl-tRNA synthetase</fullName>
        <shortName evidence="1">GlnRS</shortName>
    </alternativeName>
</protein>
<gene>
    <name evidence="1" type="primary">glnS</name>
    <name type="ordered locus">SBO_0542</name>
</gene>
<feature type="chain" id="PRO_0000242875" description="Glutamine--tRNA ligase">
    <location>
        <begin position="1"/>
        <end position="554"/>
    </location>
</feature>
<feature type="short sequence motif" description="'HIGH' region" evidence="1">
    <location>
        <begin position="34"/>
        <end position="44"/>
    </location>
</feature>
<feature type="short sequence motif" description="'KMSKS' region" evidence="1">
    <location>
        <begin position="268"/>
        <end position="272"/>
    </location>
</feature>
<feature type="binding site" evidence="1">
    <location>
        <begin position="35"/>
        <end position="37"/>
    </location>
    <ligand>
        <name>ATP</name>
        <dbReference type="ChEBI" id="CHEBI:30616"/>
    </ligand>
</feature>
<feature type="binding site" evidence="1">
    <location>
        <begin position="41"/>
        <end position="47"/>
    </location>
    <ligand>
        <name>ATP</name>
        <dbReference type="ChEBI" id="CHEBI:30616"/>
    </ligand>
</feature>
<feature type="binding site" evidence="1">
    <location>
        <position position="67"/>
    </location>
    <ligand>
        <name>L-glutamine</name>
        <dbReference type="ChEBI" id="CHEBI:58359"/>
    </ligand>
</feature>
<feature type="binding site" evidence="1">
    <location>
        <position position="212"/>
    </location>
    <ligand>
        <name>L-glutamine</name>
        <dbReference type="ChEBI" id="CHEBI:58359"/>
    </ligand>
</feature>
<feature type="binding site" evidence="1">
    <location>
        <position position="231"/>
    </location>
    <ligand>
        <name>ATP</name>
        <dbReference type="ChEBI" id="CHEBI:30616"/>
    </ligand>
</feature>
<feature type="binding site" evidence="1">
    <location>
        <begin position="261"/>
        <end position="262"/>
    </location>
    <ligand>
        <name>ATP</name>
        <dbReference type="ChEBI" id="CHEBI:30616"/>
    </ligand>
</feature>
<feature type="binding site" evidence="1">
    <location>
        <begin position="269"/>
        <end position="271"/>
    </location>
    <ligand>
        <name>ATP</name>
        <dbReference type="ChEBI" id="CHEBI:30616"/>
    </ligand>
</feature>
<evidence type="ECO:0000255" key="1">
    <source>
        <dbReference type="HAMAP-Rule" id="MF_00126"/>
    </source>
</evidence>
<proteinExistence type="inferred from homology"/>
<reference key="1">
    <citation type="journal article" date="2005" name="Nucleic Acids Res.">
        <title>Genome dynamics and diversity of Shigella species, the etiologic agents of bacillary dysentery.</title>
        <authorList>
            <person name="Yang F."/>
            <person name="Yang J."/>
            <person name="Zhang X."/>
            <person name="Chen L."/>
            <person name="Jiang Y."/>
            <person name="Yan Y."/>
            <person name="Tang X."/>
            <person name="Wang J."/>
            <person name="Xiong Z."/>
            <person name="Dong J."/>
            <person name="Xue Y."/>
            <person name="Zhu Y."/>
            <person name="Xu X."/>
            <person name="Sun L."/>
            <person name="Chen S."/>
            <person name="Nie H."/>
            <person name="Peng J."/>
            <person name="Xu J."/>
            <person name="Wang Y."/>
            <person name="Yuan Z."/>
            <person name="Wen Y."/>
            <person name="Yao Z."/>
            <person name="Shen Y."/>
            <person name="Qiang B."/>
            <person name="Hou Y."/>
            <person name="Yu J."/>
            <person name="Jin Q."/>
        </authorList>
    </citation>
    <scope>NUCLEOTIDE SEQUENCE [LARGE SCALE GENOMIC DNA]</scope>
    <source>
        <strain>Sb227</strain>
    </source>
</reference>
<keyword id="KW-0030">Aminoacyl-tRNA synthetase</keyword>
<keyword id="KW-0067">ATP-binding</keyword>
<keyword id="KW-0963">Cytoplasm</keyword>
<keyword id="KW-0436">Ligase</keyword>
<keyword id="KW-0547">Nucleotide-binding</keyword>
<keyword id="KW-0648">Protein biosynthesis</keyword>
<organism>
    <name type="scientific">Shigella boydii serotype 4 (strain Sb227)</name>
    <dbReference type="NCBI Taxonomy" id="300268"/>
    <lineage>
        <taxon>Bacteria</taxon>
        <taxon>Pseudomonadati</taxon>
        <taxon>Pseudomonadota</taxon>
        <taxon>Gammaproteobacteria</taxon>
        <taxon>Enterobacterales</taxon>
        <taxon>Enterobacteriaceae</taxon>
        <taxon>Shigella</taxon>
    </lineage>
</organism>